<comment type="catalytic activity">
    <reaction>
        <text>an N-acyl-L-amino acid + H2O = an L-alpha-amino acid + a carboxylate</text>
        <dbReference type="Rhea" id="RHEA:15565"/>
        <dbReference type="ChEBI" id="CHEBI:15377"/>
        <dbReference type="ChEBI" id="CHEBI:29067"/>
        <dbReference type="ChEBI" id="CHEBI:59869"/>
        <dbReference type="ChEBI" id="CHEBI:59874"/>
        <dbReference type="EC" id="3.5.1.14"/>
    </reaction>
</comment>
<comment type="catalytic activity">
    <reaction>
        <text>an N-acetyl-L-cysteine-S-conjugate + H2O = an S-substituted L-cysteine + acetate</text>
        <dbReference type="Rhea" id="RHEA:36855"/>
        <dbReference type="ChEBI" id="CHEBI:15377"/>
        <dbReference type="ChEBI" id="CHEBI:30089"/>
        <dbReference type="ChEBI" id="CHEBI:58717"/>
        <dbReference type="ChEBI" id="CHEBI:58718"/>
        <dbReference type="EC" id="3.5.1.14"/>
    </reaction>
</comment>
<comment type="cofactor">
    <cofactor evidence="1">
        <name>Co(2+)</name>
        <dbReference type="ChEBI" id="CHEBI:48828"/>
    </cofactor>
</comment>
<comment type="subunit">
    <text>Homotetramer.</text>
</comment>
<comment type="similarity">
    <text evidence="2">Belongs to the peptidase M20 family.</text>
</comment>
<protein>
    <recommendedName>
        <fullName>N-acyl-L-amino acid amidohydrolase</fullName>
        <shortName>L-aminoacylase</shortName>
        <ecNumber>3.5.1.14</ecNumber>
    </recommendedName>
</protein>
<accession>P37356</accession>
<organism>
    <name type="scientific">Parageobacillus thermoglucosidasius</name>
    <name type="common">Geobacillus thermoglucosidasius</name>
    <dbReference type="NCBI Taxonomy" id="1426"/>
    <lineage>
        <taxon>Bacteria</taxon>
        <taxon>Bacillati</taxon>
        <taxon>Bacillota</taxon>
        <taxon>Bacilli</taxon>
        <taxon>Bacillales</taxon>
        <taxon>Anoxybacillaceae</taxon>
        <taxon>Parageobacillus</taxon>
    </lineage>
</organism>
<reference key="1">
    <citation type="journal article" date="1987" name="Agric. Biol. Chem.">
        <title>Thermostable aminoacylase from Bacillus thermoglucosidius. Purification and characterization.</title>
        <authorList>
            <person name="Cho H.-Y."/>
            <person name="Tanizawa K."/>
            <person name="Tanaka H."/>
            <person name="Soda K."/>
        </authorList>
    </citation>
    <scope>PROTEIN SEQUENCE</scope>
    <scope>CHARACTERIZATION</scope>
</reference>
<keyword id="KW-0170">Cobalt</keyword>
<keyword id="KW-0903">Direct protein sequencing</keyword>
<keyword id="KW-0378">Hydrolase</keyword>
<sequence>MTNEEIKRLVDEVKEGVIAXRRHL</sequence>
<dbReference type="EC" id="3.5.1.14"/>
<dbReference type="STRING" id="1426.AOT13_01855"/>
<dbReference type="eggNOG" id="COG1473">
    <property type="taxonomic scope" value="Bacteria"/>
</dbReference>
<dbReference type="GO" id="GO:0004046">
    <property type="term" value="F:aminoacylase activity"/>
    <property type="evidence" value="ECO:0007669"/>
    <property type="project" value="UniProtKB-EC"/>
</dbReference>
<feature type="chain" id="PRO_0000061950" description="N-acyl-L-amino acid amidohydrolase">
    <location>
        <begin position="1"/>
        <end position="24" status="greater than"/>
    </location>
</feature>
<feature type="non-terminal residue">
    <location>
        <position position="24"/>
    </location>
</feature>
<proteinExistence type="evidence at protein level"/>
<name>AMAA_PARTM</name>
<evidence type="ECO:0000250" key="1"/>
<evidence type="ECO:0000305" key="2"/>